<accession>P35753</accession>
<evidence type="ECO:0000250" key="1"/>
<evidence type="ECO:0000255" key="2">
    <source>
        <dbReference type="PROSITE-ProRule" id="PRU00021"/>
    </source>
</evidence>
<evidence type="ECO:0000269" key="3">
    <source>
    </source>
</evidence>
<evidence type="ECO:0000305" key="4"/>
<evidence type="ECO:0007829" key="5">
    <source>
        <dbReference type="PDB" id="1C89"/>
    </source>
</evidence>
<evidence type="ECO:0007829" key="6">
    <source>
        <dbReference type="PDB" id="3RDN"/>
    </source>
</evidence>
<proteinExistence type="evidence at protein level"/>
<comment type="function">
    <text evidence="1">Contributes to protect fish blood from freezing at subzero sea water temperatures. Lowers the blood freezing point. Binds to nascent ice crystals and prevents further growth (By similarity).</text>
</comment>
<comment type="subcellular location">
    <subcellularLocation>
        <location evidence="3">Secreted</location>
    </subcellularLocation>
</comment>
<comment type="tissue specificity">
    <text evidence="3">Detected in blood serum (at protein level).</text>
</comment>
<comment type="similarity">
    <text evidence="4">Belongs to the type-III AFP family.</text>
</comment>
<keyword id="KW-0002">3D-structure</keyword>
<keyword id="KW-0047">Antifreeze protein</keyword>
<keyword id="KW-0903">Direct protein sequencing</keyword>
<keyword id="KW-0677">Repeat</keyword>
<keyword id="KW-0964">Secreted</keyword>
<name>ANP3_LYCDA</name>
<feature type="chain" id="PRO_0000155153" description="Ice-structuring protein RD3">
    <location>
        <begin position="1"/>
        <end position="134"/>
    </location>
</feature>
<feature type="domain" description="AFP-like 1" evidence="2">
    <location>
        <begin position="4"/>
        <end position="63"/>
    </location>
</feature>
<feature type="domain" description="AFP-like 2" evidence="2">
    <location>
        <begin position="74"/>
        <end position="133"/>
    </location>
</feature>
<feature type="region of interest" description="Linker">
    <location>
        <begin position="65"/>
        <end position="70"/>
    </location>
</feature>
<feature type="site" description="Important for ice-binding" evidence="1">
    <location>
        <position position="9"/>
    </location>
</feature>
<feature type="site" description="Important for ice-binding" evidence="1">
    <location>
        <position position="14"/>
    </location>
</feature>
<feature type="site" description="Important for ice-binding" evidence="1">
    <location>
        <position position="18"/>
    </location>
</feature>
<feature type="site" description="Important for ice-binding" evidence="1">
    <location>
        <position position="44"/>
    </location>
</feature>
<feature type="site" description="Important for ice-binding" evidence="1">
    <location>
        <position position="79"/>
    </location>
</feature>
<feature type="site" description="Important for ice-binding" evidence="1">
    <location>
        <position position="84"/>
    </location>
</feature>
<feature type="site" description="Important for ice-binding" evidence="1">
    <location>
        <position position="88"/>
    </location>
</feature>
<feature type="site" description="Important for ice-binding" evidence="1">
    <location>
        <position position="114"/>
    </location>
</feature>
<feature type="strand" evidence="5">
    <location>
        <begin position="4"/>
        <end position="9"/>
    </location>
</feature>
<feature type="turn" evidence="5">
    <location>
        <begin position="19"/>
        <end position="21"/>
    </location>
</feature>
<feature type="strand" evidence="5">
    <location>
        <begin position="22"/>
        <end position="25"/>
    </location>
</feature>
<feature type="strand" evidence="5">
    <location>
        <begin position="32"/>
        <end position="34"/>
    </location>
</feature>
<feature type="helix" evidence="5">
    <location>
        <begin position="37"/>
        <end position="40"/>
    </location>
</feature>
<feature type="strand" evidence="6">
    <location>
        <begin position="45"/>
        <end position="47"/>
    </location>
</feature>
<feature type="turn" evidence="5">
    <location>
        <begin position="57"/>
        <end position="59"/>
    </location>
</feature>
<feature type="strand" evidence="6">
    <location>
        <begin position="60"/>
        <end position="62"/>
    </location>
</feature>
<feature type="strand" evidence="5">
    <location>
        <begin position="71"/>
        <end position="79"/>
    </location>
</feature>
<feature type="turn" evidence="5">
    <location>
        <begin position="89"/>
        <end position="91"/>
    </location>
</feature>
<feature type="strand" evidence="5">
    <location>
        <begin position="93"/>
        <end position="96"/>
    </location>
</feature>
<feature type="strand" evidence="5">
    <location>
        <begin position="103"/>
        <end position="106"/>
    </location>
</feature>
<feature type="helix" evidence="5">
    <location>
        <begin position="107"/>
        <end position="110"/>
    </location>
</feature>
<feature type="strand" evidence="5">
    <location>
        <begin position="121"/>
        <end position="124"/>
    </location>
</feature>
<feature type="turn" evidence="5">
    <location>
        <begin position="127"/>
        <end position="129"/>
    </location>
</feature>
<sequence>NKASVVANQLIPINTALTLIMMKAEVVTPMGIPAEEIPNLVGMQVNRAVPLGTTLMPDMVKNYEDGTTSPGLKSVVANQLIPINTALTLVMMKAEEVSPKGIPSEEISKLVGMQVNRAVYLDQTLMPDMVKNYE</sequence>
<dbReference type="PIR" id="S53514">
    <property type="entry name" value="S53514"/>
</dbReference>
<dbReference type="PDB" id="1C89">
    <property type="method" value="NMR"/>
    <property type="chains" value="A=1-134"/>
</dbReference>
<dbReference type="PDB" id="1C8A">
    <property type="method" value="NMR"/>
    <property type="chains" value="A=1-134"/>
</dbReference>
<dbReference type="PDB" id="3NLA">
    <property type="method" value="NMR"/>
    <property type="chains" value="A=1-73"/>
</dbReference>
<dbReference type="PDB" id="3RDN">
    <property type="method" value="NMR"/>
    <property type="chains" value="A=1-73"/>
</dbReference>
<dbReference type="PDBsum" id="1C89"/>
<dbReference type="PDBsum" id="1C8A"/>
<dbReference type="PDBsum" id="3NLA"/>
<dbReference type="PDBsum" id="3RDN"/>
<dbReference type="BMRB" id="P35753"/>
<dbReference type="SMR" id="P35753"/>
<dbReference type="EvolutionaryTrace" id="P35753"/>
<dbReference type="GO" id="GO:0005576">
    <property type="term" value="C:extracellular region"/>
    <property type="evidence" value="ECO:0007669"/>
    <property type="project" value="UniProtKB-SubCell"/>
</dbReference>
<dbReference type="CDD" id="cd11617">
    <property type="entry name" value="Antifreeze_III"/>
    <property type="match status" value="2"/>
</dbReference>
<dbReference type="Gene3D" id="3.90.1210.10">
    <property type="entry name" value="Antifreeze-like/N-acetylneuraminic acid synthase C-terminal domain"/>
    <property type="match status" value="2"/>
</dbReference>
<dbReference type="InterPro" id="IPR006190">
    <property type="entry name" value="AFP_Neu5c_C"/>
</dbReference>
<dbReference type="InterPro" id="IPR036732">
    <property type="entry name" value="AFP_Neu5c_C_sf"/>
</dbReference>
<dbReference type="InterPro" id="IPR006013">
    <property type="entry name" value="Antifreeze_III"/>
</dbReference>
<dbReference type="InterPro" id="IPR013974">
    <property type="entry name" value="SAF"/>
</dbReference>
<dbReference type="Pfam" id="PF08666">
    <property type="entry name" value="SAF"/>
    <property type="match status" value="1"/>
</dbReference>
<dbReference type="PRINTS" id="PR00357">
    <property type="entry name" value="ANTIFREEZIII"/>
</dbReference>
<dbReference type="SMART" id="SM00858">
    <property type="entry name" value="SAF"/>
    <property type="match status" value="2"/>
</dbReference>
<dbReference type="SUPFAM" id="SSF51269">
    <property type="entry name" value="AFP III-like domain"/>
    <property type="match status" value="2"/>
</dbReference>
<dbReference type="PROSITE" id="PS50844">
    <property type="entry name" value="AFP_LIKE"/>
    <property type="match status" value="2"/>
</dbReference>
<organism>
    <name type="scientific">Lycodichthys dearborni</name>
    <name type="common">Antarctic eelpout</name>
    <name type="synonym">Rhigophila dearborni</name>
    <dbReference type="NCBI Taxonomy" id="8201"/>
    <lineage>
        <taxon>Eukaryota</taxon>
        <taxon>Metazoa</taxon>
        <taxon>Chordata</taxon>
        <taxon>Craniata</taxon>
        <taxon>Vertebrata</taxon>
        <taxon>Euteleostomi</taxon>
        <taxon>Actinopterygii</taxon>
        <taxon>Neopterygii</taxon>
        <taxon>Teleostei</taxon>
        <taxon>Neoteleostei</taxon>
        <taxon>Acanthomorphata</taxon>
        <taxon>Eupercaria</taxon>
        <taxon>Perciformes</taxon>
        <taxon>Cottioidei</taxon>
        <taxon>Zoarcales</taxon>
        <taxon>Zoarcidae</taxon>
        <taxon>Lycodinae</taxon>
        <taxon>Lycodichthys</taxon>
    </lineage>
</organism>
<reference key="1">
    <citation type="journal article" date="1995" name="Biochim. Biophys. Acta">
        <title>Antifreeze peptide heterogeneity in an antarctic eel pout includes an unusually large major variant comprised of two 7 kDa type III AFPs linked in tandem.</title>
        <authorList>
            <person name="Wang X."/>
            <person name="Devries A.L."/>
            <person name="Cheng C.-H.C."/>
        </authorList>
    </citation>
    <scope>PROTEIN SEQUENCE</scope>
    <scope>SUBCELLULAR LOCATION</scope>
    <scope>TISSUE SPECIFICITY</scope>
</reference>
<reference key="2">
    <citation type="journal article" date="1999" name="J. Biochem.">
        <title>Determination of the solution structure of the N-domain plus linker of antarctic eel pout antifreeze protein RD3.</title>
        <authorList>
            <person name="Miura K."/>
            <person name="Ohgiya S."/>
            <person name="Hoshino T."/>
            <person name="Nemoto N."/>
            <person name="Odaira M."/>
            <person name="Nitta K."/>
            <person name="Tsuda S."/>
        </authorList>
    </citation>
    <scope>STRUCTURE BY NMR OF 1-73</scope>
</reference>
<reference key="3">
    <citation type="journal article" date="2001" name="J. Biol. Chem.">
        <title>NMR analysis of type III antifreeze protein intramolecular dimer. Structural basis for enhanced activity.</title>
        <authorList>
            <person name="Miura K."/>
            <person name="Ohgiya S."/>
            <person name="Hoshino T."/>
            <person name="Nemoto N."/>
            <person name="Suetake T."/>
            <person name="Miura A."/>
            <person name="Spyracopoulos L."/>
            <person name="Kondo H."/>
            <person name="Tsuda S."/>
        </authorList>
    </citation>
    <scope>STRUCTURE BY NMR</scope>
</reference>
<protein>
    <recommendedName>
        <fullName>Ice-structuring protein RD3</fullName>
        <shortName>ISP RD3</shortName>
    </recommendedName>
    <alternativeName>
        <fullName>Antifreeze peptide RD3</fullName>
    </alternativeName>
</protein>